<proteinExistence type="inferred from homology"/>
<organismHost>
    <name type="scientific">Aves</name>
    <dbReference type="NCBI Taxonomy" id="8782"/>
</organismHost>
<organismHost>
    <name type="scientific">Equus caballus</name>
    <name type="common">Horse</name>
    <dbReference type="NCBI Taxonomy" id="9796"/>
</organismHost>
<organismHost>
    <name type="scientific">Homo sapiens</name>
    <name type="common">Human</name>
    <dbReference type="NCBI Taxonomy" id="9606"/>
</organismHost>
<organismHost>
    <name type="scientific">Phocidae</name>
    <name type="common">true seals</name>
    <dbReference type="NCBI Taxonomy" id="9709"/>
</organismHost>
<evidence type="ECO:0000255" key="1">
    <source>
        <dbReference type="HAMAP-Rule" id="MF_04062"/>
    </source>
</evidence>
<keyword id="KW-1157">Cap snatching</keyword>
<keyword id="KW-1262">Eukaryotic host gene expression shutoff by virus</keyword>
<keyword id="KW-1191">Eukaryotic host transcription shutoff by virus</keyword>
<keyword id="KW-1190">Host gene expression shutoff by virus</keyword>
<keyword id="KW-1048">Host nucleus</keyword>
<keyword id="KW-0945">Host-virus interaction</keyword>
<keyword id="KW-1104">Inhibition of host RNA polymerase II by virus</keyword>
<keyword id="KW-0506">mRNA capping</keyword>
<keyword id="KW-0507">mRNA processing</keyword>
<keyword id="KW-1195">Viral transcription</keyword>
<keyword id="KW-0946">Virion</keyword>
<gene>
    <name evidence="1" type="primary">PB2</name>
</gene>
<reference key="1">
    <citation type="journal article" date="2006" name="Science">
        <title>Large-scale sequence analysis of avian influenza isolates.</title>
        <authorList>
            <person name="Obenauer J.C."/>
            <person name="Denson J."/>
            <person name="Mehta P.K."/>
            <person name="Su X."/>
            <person name="Mukatira S."/>
            <person name="Finkelstein D.B."/>
            <person name="Xu X."/>
            <person name="Wang J."/>
            <person name="Ma J."/>
            <person name="Fan Y."/>
            <person name="Rakestraw K.M."/>
            <person name="Webster R.G."/>
            <person name="Hoffmann E."/>
            <person name="Krauss S."/>
            <person name="Zheng J."/>
            <person name="Zhang Z."/>
            <person name="Naeve C.W."/>
        </authorList>
    </citation>
    <scope>NUCLEOTIDE SEQUENCE [GENOMIC RNA]</scope>
</reference>
<comment type="function">
    <text evidence="1">Plays an essential role in transcription initiation and cap-stealing mechanism, in which cellular capped pre-mRNAs are used to generate primers for viral transcription. Recognizes and binds the 7-methylguanosine-containing cap of the target pre-RNA which is subsequently cleaved after 10-13 nucleotides by the viral protein PA. Plays a role in the initiation of the viral genome replication and modulates the activity of the ribonucleoprotein (RNP) complex.</text>
</comment>
<comment type="subunit">
    <text evidence="1">Influenza RNA polymerase is composed of three subunits: PB1, PB2 and PA. Interacts (via N-terminus) with PB1 (via C-terminus). Interacts with nucleoprotein NP (via N-terminus).</text>
</comment>
<comment type="subcellular location">
    <subcellularLocation>
        <location evidence="1">Virion</location>
    </subcellularLocation>
    <subcellularLocation>
        <location evidence="1">Host nucleus</location>
    </subcellularLocation>
</comment>
<comment type="similarity">
    <text evidence="1">Belongs to the influenza viruses PB2 family.</text>
</comment>
<dbReference type="EMBL" id="CY015058">
    <property type="protein sequence ID" value="ABI85074.1"/>
    <property type="molecule type" value="Genomic_RNA"/>
</dbReference>
<dbReference type="SMR" id="Q0A2K8"/>
<dbReference type="Proteomes" id="UP000160986">
    <property type="component" value="Genome"/>
</dbReference>
<dbReference type="GO" id="GO:0042025">
    <property type="term" value="C:host cell nucleus"/>
    <property type="evidence" value="ECO:0007669"/>
    <property type="project" value="UniProtKB-SubCell"/>
</dbReference>
<dbReference type="GO" id="GO:0044423">
    <property type="term" value="C:virion component"/>
    <property type="evidence" value="ECO:0007669"/>
    <property type="project" value="UniProtKB-UniRule"/>
</dbReference>
<dbReference type="GO" id="GO:0003723">
    <property type="term" value="F:RNA binding"/>
    <property type="evidence" value="ECO:0007669"/>
    <property type="project" value="UniProtKB-UniRule"/>
</dbReference>
<dbReference type="GO" id="GO:0003968">
    <property type="term" value="F:RNA-directed RNA polymerase activity"/>
    <property type="evidence" value="ECO:0007669"/>
    <property type="project" value="UniProtKB-UniRule"/>
</dbReference>
<dbReference type="GO" id="GO:0006370">
    <property type="term" value="P:7-methylguanosine mRNA capping"/>
    <property type="evidence" value="ECO:0007669"/>
    <property type="project" value="UniProtKB-UniRule"/>
</dbReference>
<dbReference type="GO" id="GO:0075526">
    <property type="term" value="P:cap snatching"/>
    <property type="evidence" value="ECO:0007669"/>
    <property type="project" value="UniProtKB-UniRule"/>
</dbReference>
<dbReference type="GO" id="GO:0006351">
    <property type="term" value="P:DNA-templated transcription"/>
    <property type="evidence" value="ECO:0007669"/>
    <property type="project" value="UniProtKB-UniRule"/>
</dbReference>
<dbReference type="GO" id="GO:0039657">
    <property type="term" value="P:symbiont-mediated suppression of host gene expression"/>
    <property type="evidence" value="ECO:0007669"/>
    <property type="project" value="UniProtKB-KW"/>
</dbReference>
<dbReference type="GO" id="GO:0039523">
    <property type="term" value="P:symbiont-mediated suppression of host mRNA transcription via inhibition of RNA polymerase II activity"/>
    <property type="evidence" value="ECO:0007669"/>
    <property type="project" value="UniProtKB-UniRule"/>
</dbReference>
<dbReference type="GO" id="GO:0039694">
    <property type="term" value="P:viral RNA genome replication"/>
    <property type="evidence" value="ECO:0007669"/>
    <property type="project" value="InterPro"/>
</dbReference>
<dbReference type="FunFam" id="3.30.30.90:FF:000001">
    <property type="entry name" value="Polymerase basic protein 2"/>
    <property type="match status" value="1"/>
</dbReference>
<dbReference type="Gene3D" id="3.30.30.90">
    <property type="entry name" value="Polymerase Basic Protein 2, C-terminal domain"/>
    <property type="match status" value="1"/>
</dbReference>
<dbReference type="HAMAP" id="MF_04062">
    <property type="entry name" value="INV_PB2"/>
    <property type="match status" value="1"/>
</dbReference>
<dbReference type="InterPro" id="IPR049110">
    <property type="entry name" value="Flu_PB2_2nd"/>
</dbReference>
<dbReference type="InterPro" id="IPR049114">
    <property type="entry name" value="Flu_PB2_6th"/>
</dbReference>
<dbReference type="InterPro" id="IPR049115">
    <property type="entry name" value="Flu_PB2_C"/>
</dbReference>
<dbReference type="InterPro" id="IPR048298">
    <property type="entry name" value="Flu_PB2_CAP-bd"/>
</dbReference>
<dbReference type="InterPro" id="IPR049111">
    <property type="entry name" value="Flu_PB2_middle"/>
</dbReference>
<dbReference type="InterPro" id="IPR049106">
    <property type="entry name" value="Flu_PB2_N"/>
</dbReference>
<dbReference type="InterPro" id="IPR001591">
    <property type="entry name" value="INV_PB2"/>
</dbReference>
<dbReference type="InterPro" id="IPR049113">
    <property type="entry name" value="PB2_helical"/>
</dbReference>
<dbReference type="InterPro" id="IPR037258">
    <property type="entry name" value="PDB2_C"/>
</dbReference>
<dbReference type="Pfam" id="PF20947">
    <property type="entry name" value="Flu_PB2_1st"/>
    <property type="match status" value="1"/>
</dbReference>
<dbReference type="Pfam" id="PF20948">
    <property type="entry name" value="Flu_PB2_2nd"/>
    <property type="match status" value="1"/>
</dbReference>
<dbReference type="Pfam" id="PF20949">
    <property type="entry name" value="Flu_PB2_3rd"/>
    <property type="match status" value="1"/>
</dbReference>
<dbReference type="Pfam" id="PF20950">
    <property type="entry name" value="Flu_PB2_4th"/>
    <property type="match status" value="1"/>
</dbReference>
<dbReference type="Pfam" id="PF00604">
    <property type="entry name" value="Flu_PB2_5th"/>
    <property type="match status" value="1"/>
</dbReference>
<dbReference type="Pfam" id="PF20951">
    <property type="entry name" value="Flu_PB2_6th"/>
    <property type="match status" value="1"/>
</dbReference>
<dbReference type="Pfam" id="PF20952">
    <property type="entry name" value="Flu_PB2_7th"/>
    <property type="match status" value="1"/>
</dbReference>
<dbReference type="SUPFAM" id="SSF160453">
    <property type="entry name" value="PB2 C-terminal domain-like"/>
    <property type="match status" value="1"/>
</dbReference>
<organism>
    <name type="scientific">Influenza A virus (strain A/Chicken/Brescia/1902 H7N7)</name>
    <dbReference type="NCBI Taxonomy" id="36418"/>
    <lineage>
        <taxon>Viruses</taxon>
        <taxon>Riboviria</taxon>
        <taxon>Orthornavirae</taxon>
        <taxon>Negarnaviricota</taxon>
        <taxon>Polyploviricotina</taxon>
        <taxon>Insthoviricetes</taxon>
        <taxon>Articulavirales</taxon>
        <taxon>Orthomyxoviridae</taxon>
        <taxon>Alphainfluenzavirus</taxon>
        <taxon>Alphainfluenzavirus influenzae</taxon>
        <taxon>Influenza A virus</taxon>
    </lineage>
</organism>
<protein>
    <recommendedName>
        <fullName evidence="1">Polymerase basic protein 2</fullName>
    </recommendedName>
    <alternativeName>
        <fullName evidence="1">RNA-directed RNA polymerase subunit P3</fullName>
    </alternativeName>
</protein>
<accession>Q0A2K8</accession>
<feature type="chain" id="PRO_0000279622" description="Polymerase basic protein 2">
    <location>
        <begin position="1"/>
        <end position="759"/>
    </location>
</feature>
<feature type="short sequence motif" description="Nuclear localization signal" evidence="1">
    <location>
        <begin position="736"/>
        <end position="739"/>
    </location>
</feature>
<feature type="site" description="Avian adaptation" evidence="1">
    <location>
        <position position="627"/>
    </location>
</feature>
<name>PB2_I02A0</name>
<sequence>MERIKELRDLMSQSRTREILTKTTVDHMAIIKKYTSGRQEKNPALRMKWMMAMKYPITADKRIMEMIPERNEQGQTLWSKTNDAGSDRVMVSPLAVTWWNRNGPTTSTVHYPKVYKTYFEKIERLKHGTFGPVRFRNQVKIRRRVDINPGHADLSSKEAQDVIMEVVFPNEVGARILTSESQLTITKEKKEELQDCKIAPLMVAYMLERELVRKTRFLPVAGGTSSVYIEVLHLTQGTCWEQMYTPGGEVRNDDVDQSLIIAARNIVRRAAVSADPLASLLEMCHSTQIGGIRMVDILRQNPTEEQAVDICKAAMGLRISSSFSFGGFTFKRTSGSSVKREEEVLTGNLQTLKIRVHEGYEEFTMVGRRATAILRKATRRLIQLIVSGRDEQSIAEAIIVAMVFSQEDCMIKAVRGDLNFVNRANQRLNPMHQLLRHFQKDAKVLFQNWGIEPIDNVMGMVGILPDMTPNTEMSLRGVRVSKMGVDEYSSTERVVVSIDRFLRVRDQRGNVLLSPEEVSETQGTEKLTITYSSSMMWEINGPESVLVNTYQWIIRNWETVKIQWSQDPTMLYNKMEFEPFQSLVPKAARGQYSGFVRTLFQQMRDVLGTFDTVQIIKLLPFAAAPPEQSRMQFSSLTVNVRGSGMRILVRGNSPVFNYNKATKRLTVLGKDAGALTEDPNEGTAGVESAVLRGFLILGKEDKRYGPALSINELSNLAKGEKANVLIGQGDVVLVMKRKRDSSILTDSQTATKRIRMAIN</sequence>